<reference key="1">
    <citation type="journal article" date="2005" name="J. Bacteriol.">
        <title>Whole-genome sequence analysis of Pseudomonas syringae pv. phaseolicola 1448A reveals divergence among pathovars in genes involved in virulence and transposition.</title>
        <authorList>
            <person name="Joardar V."/>
            <person name="Lindeberg M."/>
            <person name="Jackson R.W."/>
            <person name="Selengut J."/>
            <person name="Dodson R."/>
            <person name="Brinkac L.M."/>
            <person name="Daugherty S.C."/>
            <person name="DeBoy R.T."/>
            <person name="Durkin A.S."/>
            <person name="Gwinn Giglio M."/>
            <person name="Madupu R."/>
            <person name="Nelson W.C."/>
            <person name="Rosovitz M.J."/>
            <person name="Sullivan S.A."/>
            <person name="Crabtree J."/>
            <person name="Creasy T."/>
            <person name="Davidsen T.M."/>
            <person name="Haft D.H."/>
            <person name="Zafar N."/>
            <person name="Zhou L."/>
            <person name="Halpin R."/>
            <person name="Holley T."/>
            <person name="Khouri H.M."/>
            <person name="Feldblyum T.V."/>
            <person name="White O."/>
            <person name="Fraser C.M."/>
            <person name="Chatterjee A.K."/>
            <person name="Cartinhour S."/>
            <person name="Schneider D."/>
            <person name="Mansfield J.W."/>
            <person name="Collmer A."/>
            <person name="Buell R."/>
        </authorList>
    </citation>
    <scope>NUCLEOTIDE SEQUENCE [LARGE SCALE GENOMIC DNA]</scope>
    <source>
        <strain>1448A / Race 6</strain>
    </source>
</reference>
<keyword id="KW-0067">ATP-binding</keyword>
<keyword id="KW-0238">DNA-binding</keyword>
<keyword id="KW-0479">Metal-binding</keyword>
<keyword id="KW-0547">Nucleotide-binding</keyword>
<keyword id="KW-0678">Repressor</keyword>
<keyword id="KW-0804">Transcription</keyword>
<keyword id="KW-0805">Transcription regulation</keyword>
<keyword id="KW-0862">Zinc</keyword>
<keyword id="KW-0863">Zinc-finger</keyword>
<name>NRDR_PSE14</name>
<proteinExistence type="inferred from homology"/>
<gene>
    <name evidence="1" type="primary">nrdR</name>
    <name type="ordered locus">PSPPH_4508</name>
</gene>
<feature type="chain" id="PRO_0000230883" description="Transcriptional repressor NrdR">
    <location>
        <begin position="1"/>
        <end position="154"/>
    </location>
</feature>
<feature type="domain" description="ATP-cone" evidence="1">
    <location>
        <begin position="49"/>
        <end position="139"/>
    </location>
</feature>
<feature type="zinc finger region" evidence="1">
    <location>
        <begin position="3"/>
        <end position="34"/>
    </location>
</feature>
<evidence type="ECO:0000255" key="1">
    <source>
        <dbReference type="HAMAP-Rule" id="MF_00440"/>
    </source>
</evidence>
<accession>Q48DB7</accession>
<dbReference type="EMBL" id="CP000058">
    <property type="protein sequence ID" value="AAZ34707.1"/>
    <property type="molecule type" value="Genomic_DNA"/>
</dbReference>
<dbReference type="RefSeq" id="WP_002555431.1">
    <property type="nucleotide sequence ID" value="NC_005773.3"/>
</dbReference>
<dbReference type="SMR" id="Q48DB7"/>
<dbReference type="GeneID" id="69861520"/>
<dbReference type="KEGG" id="psp:PSPPH_4508"/>
<dbReference type="eggNOG" id="COG1327">
    <property type="taxonomic scope" value="Bacteria"/>
</dbReference>
<dbReference type="HOGENOM" id="CLU_108412_0_0_6"/>
<dbReference type="Proteomes" id="UP000000551">
    <property type="component" value="Chromosome"/>
</dbReference>
<dbReference type="GO" id="GO:0005524">
    <property type="term" value="F:ATP binding"/>
    <property type="evidence" value="ECO:0007669"/>
    <property type="project" value="UniProtKB-KW"/>
</dbReference>
<dbReference type="GO" id="GO:0003677">
    <property type="term" value="F:DNA binding"/>
    <property type="evidence" value="ECO:0007669"/>
    <property type="project" value="UniProtKB-KW"/>
</dbReference>
<dbReference type="GO" id="GO:0008270">
    <property type="term" value="F:zinc ion binding"/>
    <property type="evidence" value="ECO:0007669"/>
    <property type="project" value="UniProtKB-UniRule"/>
</dbReference>
<dbReference type="GO" id="GO:0045892">
    <property type="term" value="P:negative regulation of DNA-templated transcription"/>
    <property type="evidence" value="ECO:0007669"/>
    <property type="project" value="UniProtKB-UniRule"/>
</dbReference>
<dbReference type="HAMAP" id="MF_00440">
    <property type="entry name" value="NrdR"/>
    <property type="match status" value="1"/>
</dbReference>
<dbReference type="InterPro" id="IPR005144">
    <property type="entry name" value="ATP-cone_dom"/>
</dbReference>
<dbReference type="InterPro" id="IPR055173">
    <property type="entry name" value="NrdR-like_N"/>
</dbReference>
<dbReference type="InterPro" id="IPR003796">
    <property type="entry name" value="RNR_NrdR-like"/>
</dbReference>
<dbReference type="NCBIfam" id="TIGR00244">
    <property type="entry name" value="transcriptional regulator NrdR"/>
    <property type="match status" value="1"/>
</dbReference>
<dbReference type="PANTHER" id="PTHR30455">
    <property type="entry name" value="TRANSCRIPTIONAL REPRESSOR NRDR"/>
    <property type="match status" value="1"/>
</dbReference>
<dbReference type="PANTHER" id="PTHR30455:SF2">
    <property type="entry name" value="TRANSCRIPTIONAL REPRESSOR NRDR"/>
    <property type="match status" value="1"/>
</dbReference>
<dbReference type="Pfam" id="PF03477">
    <property type="entry name" value="ATP-cone"/>
    <property type="match status" value="1"/>
</dbReference>
<dbReference type="Pfam" id="PF22811">
    <property type="entry name" value="Zn_ribbon_NrdR"/>
    <property type="match status" value="1"/>
</dbReference>
<dbReference type="PROSITE" id="PS51161">
    <property type="entry name" value="ATP_CONE"/>
    <property type="match status" value="1"/>
</dbReference>
<sequence>MHCPFCGANDTKVIDSRLVAEGEQVRRRRECLACGERFTTFETAELVLPRLIKQDGSRQPFDEEKLRAGMQRALEKRPVSVERLEAALVHIKHKLRATGEREVKSLVVGELVMAELQKLDEVAYIRFASVYRRFQDLNEFREEIDRLAREPGKE</sequence>
<protein>
    <recommendedName>
        <fullName evidence="1">Transcriptional repressor NrdR</fullName>
    </recommendedName>
</protein>
<organism>
    <name type="scientific">Pseudomonas savastanoi pv. phaseolicola (strain 1448A / Race 6)</name>
    <name type="common">Pseudomonas syringae pv. phaseolicola (strain 1448A / Race 6)</name>
    <dbReference type="NCBI Taxonomy" id="264730"/>
    <lineage>
        <taxon>Bacteria</taxon>
        <taxon>Pseudomonadati</taxon>
        <taxon>Pseudomonadota</taxon>
        <taxon>Gammaproteobacteria</taxon>
        <taxon>Pseudomonadales</taxon>
        <taxon>Pseudomonadaceae</taxon>
        <taxon>Pseudomonas</taxon>
    </lineage>
</organism>
<comment type="function">
    <text evidence="1">Negatively regulates transcription of bacterial ribonucleotide reductase nrd genes and operons by binding to NrdR-boxes.</text>
</comment>
<comment type="cofactor">
    <cofactor evidence="1">
        <name>Zn(2+)</name>
        <dbReference type="ChEBI" id="CHEBI:29105"/>
    </cofactor>
    <text evidence="1">Binds 1 zinc ion.</text>
</comment>
<comment type="similarity">
    <text evidence="1">Belongs to the NrdR family.</text>
</comment>